<evidence type="ECO:0000255" key="1"/>
<evidence type="ECO:0000256" key="2">
    <source>
        <dbReference type="SAM" id="MobiDB-lite"/>
    </source>
</evidence>
<evidence type="ECO:0000305" key="3"/>
<comment type="function">
    <text>Nematode cuticles are composed largely of collagen-like proteins. The cuticle functions both as an exoskeleton and as a barrier to protect the worm from its environment. Dose-dependent regulator of body length and shape.</text>
</comment>
<comment type="subunit">
    <text>Collagen polypeptide chains are complexed within the cuticle by disulfide bonds and other types of covalent cross-links.</text>
</comment>
<comment type="similarity">
    <text evidence="3">Belongs to the cuticular collagen family.</text>
</comment>
<accession>Q23628</accession>
<organism>
    <name type="scientific">Caenorhabditis elegans</name>
    <dbReference type="NCBI Taxonomy" id="6239"/>
    <lineage>
        <taxon>Eukaryota</taxon>
        <taxon>Metazoa</taxon>
        <taxon>Ecdysozoa</taxon>
        <taxon>Nematoda</taxon>
        <taxon>Chromadorea</taxon>
        <taxon>Rhabditida</taxon>
        <taxon>Rhabditina</taxon>
        <taxon>Rhabditomorpha</taxon>
        <taxon>Rhabditoidea</taxon>
        <taxon>Rhabditidae</taxon>
        <taxon>Peloderinae</taxon>
        <taxon>Caenorhabditis</taxon>
    </lineage>
</organism>
<proteinExistence type="evidence at transcript level"/>
<name>LON3_CAEEL</name>
<keyword id="KW-0176">Collagen</keyword>
<keyword id="KW-0193">Cuticle</keyword>
<keyword id="KW-1015">Disulfide bond</keyword>
<keyword id="KW-1185">Reference proteome</keyword>
<keyword id="KW-0677">Repeat</keyword>
<keyword id="KW-0732">Signal</keyword>
<reference key="1">
    <citation type="journal article" date="2002" name="Genetics">
        <title>Increased or decreased levels of Caenorhabditis elegans lon-3, a gene encoding a collagen, cause reciprocal changes in body length.</title>
        <authorList>
            <person name="Nystroem J."/>
            <person name="Shen Z.-Z."/>
            <person name="Aili M."/>
            <person name="Flemming A.J."/>
            <person name="Leroi A."/>
            <person name="Tuck S.P."/>
        </authorList>
    </citation>
    <scope>NUCLEOTIDE SEQUENCE [MRNA]</scope>
</reference>
<reference key="2">
    <citation type="journal article" date="2002" name="Genetics">
        <title>A cuticle collagen encoded by the lon-3 gene may be a target of TGF-beta signaling in determining Caenorhabditis elegans body shape.</title>
        <authorList>
            <person name="Suzuki Y."/>
            <person name="Morris G.A."/>
            <person name="Han M."/>
            <person name="Wood W.B."/>
        </authorList>
    </citation>
    <scope>NUCLEOTIDE SEQUENCE [MRNA]</scope>
</reference>
<reference key="3">
    <citation type="journal article" date="1998" name="Science">
        <title>Genome sequence of the nematode C. elegans: a platform for investigating biology.</title>
        <authorList>
            <consortium name="The C. elegans sequencing consortium"/>
        </authorList>
    </citation>
    <scope>NUCLEOTIDE SEQUENCE [LARGE SCALE GENOMIC DNA]</scope>
    <source>
        <strain>Bristol N2</strain>
    </source>
</reference>
<sequence>MSVTTATSGALIFSGASLLVSLFAAASIYSQVSSIWTELDNEIDSFKLLTNDIWGDMINLGAGSASNRIRRQAYGGYGATGTNAPEPQFPQGDKGPLPVPGLPFGPNVSGGSDRCQCTVENTCPTGPDGEEGEQGPDGQDGVDGVPGFDGQDCPDVEQQPSQGCFTCPQGLPGPQGSQGAPGIRGMRGARGQPGYPGRDGQPGMPGEMGPTGAPGDDGAPGASGMKGDDAEKPVGRQGQRGQPGEQGPDGEEGPAGKDAFEGPPGVEGEVGVPGYQGSAGPDGEEGPRGPSGLPGKDAEYCKCPTRDDGGNSHRAWRRKHKRVY</sequence>
<dbReference type="EMBL" id="AF262406">
    <property type="protein sequence ID" value="AAL08218.1"/>
    <property type="molecule type" value="mRNA"/>
</dbReference>
<dbReference type="EMBL" id="AF465981">
    <property type="protein sequence ID" value="AAL76993.1"/>
    <property type="molecule type" value="mRNA"/>
</dbReference>
<dbReference type="EMBL" id="Z78201">
    <property type="protein sequence ID" value="CAB01588.1"/>
    <property type="molecule type" value="Genomic_DNA"/>
</dbReference>
<dbReference type="PIR" id="T28032">
    <property type="entry name" value="T28032"/>
</dbReference>
<dbReference type="RefSeq" id="NP_506061.1">
    <property type="nucleotide sequence ID" value="NM_073660.6"/>
</dbReference>
<dbReference type="SMR" id="Q23628"/>
<dbReference type="BioGRID" id="44696">
    <property type="interactions" value="2"/>
</dbReference>
<dbReference type="DIP" id="DIP-25736N"/>
<dbReference type="FunCoup" id="Q23628">
    <property type="interactions" value="749"/>
</dbReference>
<dbReference type="IntAct" id="Q23628">
    <property type="interactions" value="2"/>
</dbReference>
<dbReference type="STRING" id="6239.ZK836.1.1"/>
<dbReference type="PaxDb" id="6239-ZK836.1"/>
<dbReference type="PeptideAtlas" id="Q23628"/>
<dbReference type="EnsemblMetazoa" id="ZK836.1.1">
    <property type="protein sequence ID" value="ZK836.1.1"/>
    <property type="gene ID" value="WBGene00003057"/>
</dbReference>
<dbReference type="GeneID" id="179673"/>
<dbReference type="KEGG" id="cel:CELE_ZK836.1"/>
<dbReference type="UCSC" id="ZK836.1">
    <property type="organism name" value="c. elegans"/>
</dbReference>
<dbReference type="AGR" id="WB:WBGene00003057"/>
<dbReference type="CTD" id="179673"/>
<dbReference type="WormBase" id="ZK836.1">
    <property type="protein sequence ID" value="CE15415"/>
    <property type="gene ID" value="WBGene00003057"/>
    <property type="gene designation" value="lon-3"/>
</dbReference>
<dbReference type="eggNOG" id="KOG3544">
    <property type="taxonomic scope" value="Eukaryota"/>
</dbReference>
<dbReference type="GeneTree" id="ENSGT00940000174005"/>
<dbReference type="HOGENOM" id="CLU_001074_4_4_1"/>
<dbReference type="InParanoid" id="Q23628"/>
<dbReference type="OMA" id="GTSCDGP"/>
<dbReference type="PhylomeDB" id="Q23628"/>
<dbReference type="PRO" id="PR:Q23628"/>
<dbReference type="Proteomes" id="UP000001940">
    <property type="component" value="Chromosome V"/>
</dbReference>
<dbReference type="Bgee" id="WBGene00003057">
    <property type="expression patterns" value="Expressed in larva and 4 other cell types or tissues"/>
</dbReference>
<dbReference type="GO" id="GO:0060107">
    <property type="term" value="C:annuli extracellular matrix"/>
    <property type="evidence" value="ECO:0000314"/>
    <property type="project" value="WormBase"/>
</dbReference>
<dbReference type="GO" id="GO:0005581">
    <property type="term" value="C:collagen trimer"/>
    <property type="evidence" value="ECO:0007669"/>
    <property type="project" value="UniProtKB-KW"/>
</dbReference>
<dbReference type="GO" id="GO:0060102">
    <property type="term" value="C:cuticular extracellular matrix"/>
    <property type="evidence" value="ECO:0000314"/>
    <property type="project" value="WormBase"/>
</dbReference>
<dbReference type="GO" id="GO:0042329">
    <property type="term" value="F:structural constituent of collagen and cuticulin-based cuticle"/>
    <property type="evidence" value="ECO:0000250"/>
    <property type="project" value="WormBase"/>
</dbReference>
<dbReference type="GO" id="GO:0010171">
    <property type="term" value="P:body morphogenesis"/>
    <property type="evidence" value="ECO:0000316"/>
    <property type="project" value="WormBase"/>
</dbReference>
<dbReference type="GO" id="GO:0040015">
    <property type="term" value="P:negative regulation of multicellular organism growth"/>
    <property type="evidence" value="ECO:0000315"/>
    <property type="project" value="WormBase"/>
</dbReference>
<dbReference type="InterPro" id="IPR002486">
    <property type="entry name" value="Col_cuticle_N"/>
</dbReference>
<dbReference type="InterPro" id="IPR008160">
    <property type="entry name" value="Collagen"/>
</dbReference>
<dbReference type="PANTHER" id="PTHR24637">
    <property type="entry name" value="COLLAGEN"/>
    <property type="match status" value="1"/>
</dbReference>
<dbReference type="PANTHER" id="PTHR24637:SF276">
    <property type="entry name" value="CUTICLE COLLAGEN LON-3"/>
    <property type="match status" value="1"/>
</dbReference>
<dbReference type="Pfam" id="PF01484">
    <property type="entry name" value="Col_cuticle_N"/>
    <property type="match status" value="1"/>
</dbReference>
<dbReference type="Pfam" id="PF01391">
    <property type="entry name" value="Collagen"/>
    <property type="match status" value="1"/>
</dbReference>
<dbReference type="SMART" id="SM01088">
    <property type="entry name" value="Col_cuticle_N"/>
    <property type="match status" value="1"/>
</dbReference>
<feature type="signal peptide" evidence="1">
    <location>
        <begin position="1"/>
        <end position="30"/>
    </location>
</feature>
<feature type="chain" id="PRO_0000006431" description="Cuticle collagen lon-3">
    <location>
        <begin position="31"/>
        <end position="324"/>
    </location>
</feature>
<feature type="region of interest" description="Disordered" evidence="2">
    <location>
        <begin position="119"/>
        <end position="324"/>
    </location>
</feature>
<feature type="region of interest" description="Triple-helical region">
    <location>
        <begin position="129"/>
        <end position="152"/>
    </location>
</feature>
<feature type="region of interest" description="Triple-helical region">
    <location>
        <begin position="170"/>
        <end position="229"/>
    </location>
</feature>
<feature type="region of interest" description="Triple-helical region">
    <location>
        <begin position="235"/>
        <end position="294"/>
    </location>
</feature>
<feature type="compositionally biased region" description="Low complexity" evidence="2">
    <location>
        <begin position="136"/>
        <end position="151"/>
    </location>
</feature>
<feature type="compositionally biased region" description="Low complexity" evidence="2">
    <location>
        <begin position="168"/>
        <end position="181"/>
    </location>
</feature>
<feature type="compositionally biased region" description="Low complexity" evidence="2">
    <location>
        <begin position="210"/>
        <end position="223"/>
    </location>
</feature>
<feature type="compositionally biased region" description="Low complexity" evidence="2">
    <location>
        <begin position="235"/>
        <end position="246"/>
    </location>
</feature>
<feature type="compositionally biased region" description="Low complexity" evidence="2">
    <location>
        <begin position="261"/>
        <end position="273"/>
    </location>
</feature>
<feature type="compositionally biased region" description="Basic and acidic residues" evidence="2">
    <location>
        <begin position="296"/>
        <end position="311"/>
    </location>
</feature>
<feature type="compositionally biased region" description="Basic residues" evidence="2">
    <location>
        <begin position="314"/>
        <end position="324"/>
    </location>
</feature>
<protein>
    <recommendedName>
        <fullName>Cuticle collagen lon-3</fullName>
    </recommendedName>
</protein>
<gene>
    <name type="primary">lon-3</name>
    <name type="ORF">ZK836.1</name>
</gene>